<comment type="similarity">
    <text evidence="2">Belongs to the aldo/keto reductase family. Aldo/keto reductase 2 subfamily.</text>
</comment>
<reference key="1">
    <citation type="journal article" date="1998" name="Genetics">
        <title>Reversion of the tyrosine ochre strain Escherichia coli WU3610 under starvation conditions depends on a new gene tas.</title>
        <authorList>
            <person name="Timms A.R."/>
            <person name="Bridges B.A."/>
        </authorList>
    </citation>
    <scope>NUCLEOTIDE SEQUENCE [GENOMIC DNA]</scope>
    <source>
        <strain>B/R / WU3610</strain>
    </source>
</reference>
<reference key="2">
    <citation type="journal article" date="1997" name="Science">
        <title>The complete genome sequence of Escherichia coli K-12.</title>
        <authorList>
            <person name="Blattner F.R."/>
            <person name="Plunkett G. III"/>
            <person name="Bloch C.A."/>
            <person name="Perna N.T."/>
            <person name="Burland V."/>
            <person name="Riley M."/>
            <person name="Collado-Vides J."/>
            <person name="Glasner J.D."/>
            <person name="Rode C.K."/>
            <person name="Mayhew G.F."/>
            <person name="Gregor J."/>
            <person name="Davis N.W."/>
            <person name="Kirkpatrick H.A."/>
            <person name="Goeden M.A."/>
            <person name="Rose D.J."/>
            <person name="Mau B."/>
            <person name="Shao Y."/>
        </authorList>
    </citation>
    <scope>NUCLEOTIDE SEQUENCE [LARGE SCALE GENOMIC DNA]</scope>
    <source>
        <strain>K12 / MG1655 / ATCC 47076</strain>
    </source>
</reference>
<reference key="3">
    <citation type="journal article" date="2006" name="Mol. Syst. Biol.">
        <title>Highly accurate genome sequences of Escherichia coli K-12 strains MG1655 and W3110.</title>
        <authorList>
            <person name="Hayashi K."/>
            <person name="Morooka N."/>
            <person name="Yamamoto Y."/>
            <person name="Fujita K."/>
            <person name="Isono K."/>
            <person name="Choi S."/>
            <person name="Ohtsubo E."/>
            <person name="Baba T."/>
            <person name="Wanner B.L."/>
            <person name="Mori H."/>
            <person name="Horiuchi T."/>
        </authorList>
    </citation>
    <scope>NUCLEOTIDE SEQUENCE [LARGE SCALE GENOMIC DNA]</scope>
    <source>
        <strain>K12 / W3110 / ATCC 27325 / DSM 5911</strain>
    </source>
</reference>
<reference key="4">
    <citation type="journal article" date="2003" name="Proteins">
        <title>Crystal structure of the Escherichia coli Tas protein, an NADP(H)-dependent aldo-keto reductase.</title>
        <authorList>
            <person name="Obmolova G."/>
            <person name="Teplyakov A."/>
            <person name="Khil P.P."/>
            <person name="Howard A.J."/>
            <person name="Camerini-Otero R.D."/>
            <person name="Gilliland G.L."/>
        </authorList>
    </citation>
    <scope>X-RAY CRYSTALLOGRAPHY (1.6 ANGSTROMS) IN COMPLEX WITH NADPH</scope>
</reference>
<accession>P0A9T4</accession>
<accession>Q2MA03</accession>
<accession>Q46933</accession>
<sequence>MQYHRIPHSSLEVSTLGLGTMTFGEQNSEADAHAQLDYAVAQGINLIDVAEMYPVPPRPETQGLTETYVGNWLAKHGSREKLIIASKVSGPSRNNDKGIRPDQALDRKNIREALHDSLKRLQTDYLDLYQVHWPQRPTNCFGKLGYSWTDSAPAVSLLDTLDALAEYQRAGKIRYIGVSNETAFGVMRYLHLADKHDLPRIVTIQNPYSLLNRSFEVGLAEVSQYEGVELLAYSCLGFGTLTGKYLNGAKPAGARNTLFSRFTRYSGEQTQKAVAAYVDIARRHGLDPAQMALAFVRRQPFVASTLLGATTMDQLKTNIESLHLELSEDVLAEIEAVHQVYTYPAP</sequence>
<proteinExistence type="evidence at protein level"/>
<feature type="chain" id="PRO_0000070386" description="Protein tas">
    <location>
        <begin position="1"/>
        <end position="346"/>
    </location>
</feature>
<feature type="active site" description="Proton donor">
    <location>
        <position position="53"/>
    </location>
</feature>
<feature type="binding site" evidence="1">
    <location>
        <begin position="234"/>
        <end position="244"/>
    </location>
    <ligand>
        <name>NADP(+)</name>
        <dbReference type="ChEBI" id="CHEBI:58349"/>
    </ligand>
</feature>
<feature type="strand" evidence="3">
    <location>
        <begin position="3"/>
        <end position="5"/>
    </location>
</feature>
<feature type="strand" evidence="3">
    <location>
        <begin position="12"/>
        <end position="19"/>
    </location>
</feature>
<feature type="turn" evidence="3">
    <location>
        <begin position="24"/>
        <end position="26"/>
    </location>
</feature>
<feature type="helix" evidence="3">
    <location>
        <begin position="29"/>
        <end position="41"/>
    </location>
</feature>
<feature type="strand" evidence="3">
    <location>
        <begin position="46"/>
        <end position="48"/>
    </location>
</feature>
<feature type="strand" evidence="3">
    <location>
        <begin position="54"/>
        <end position="56"/>
    </location>
</feature>
<feature type="turn" evidence="3">
    <location>
        <begin position="59"/>
        <end position="63"/>
    </location>
</feature>
<feature type="helix" evidence="3">
    <location>
        <begin position="64"/>
        <end position="76"/>
    </location>
</feature>
<feature type="helix" evidence="3">
    <location>
        <begin position="79"/>
        <end position="81"/>
    </location>
</feature>
<feature type="strand" evidence="3">
    <location>
        <begin position="83"/>
        <end position="88"/>
    </location>
</feature>
<feature type="helix" evidence="3">
    <location>
        <begin position="107"/>
        <end position="121"/>
    </location>
</feature>
<feature type="strand" evidence="3">
    <location>
        <begin position="126"/>
        <end position="131"/>
    </location>
</feature>
<feature type="helix" evidence="3">
    <location>
        <begin position="157"/>
        <end position="169"/>
    </location>
</feature>
<feature type="strand" evidence="3">
    <location>
        <begin position="172"/>
        <end position="180"/>
    </location>
</feature>
<feature type="helix" evidence="3">
    <location>
        <begin position="183"/>
        <end position="196"/>
    </location>
</feature>
<feature type="strand" evidence="3">
    <location>
        <begin position="203"/>
        <end position="207"/>
    </location>
</feature>
<feature type="helix" evidence="3">
    <location>
        <begin position="215"/>
        <end position="226"/>
    </location>
</feature>
<feature type="strand" evidence="3">
    <location>
        <begin position="229"/>
        <end position="233"/>
    </location>
</feature>
<feature type="helix" evidence="3">
    <location>
        <begin position="237"/>
        <end position="242"/>
    </location>
</feature>
<feature type="turn" evidence="3">
    <location>
        <begin position="243"/>
        <end position="245"/>
    </location>
</feature>
<feature type="helix" evidence="3">
    <location>
        <begin position="246"/>
        <end position="248"/>
    </location>
</feature>
<feature type="helix" evidence="3">
    <location>
        <begin position="255"/>
        <end position="258"/>
    </location>
</feature>
<feature type="helix" evidence="3">
    <location>
        <begin position="268"/>
        <end position="283"/>
    </location>
</feature>
<feature type="helix" evidence="3">
    <location>
        <begin position="288"/>
        <end position="297"/>
    </location>
</feature>
<feature type="strand" evidence="3">
    <location>
        <begin position="302"/>
        <end position="307"/>
    </location>
</feature>
<feature type="helix" evidence="3">
    <location>
        <begin position="312"/>
        <end position="319"/>
    </location>
</feature>
<feature type="helix" evidence="3">
    <location>
        <begin position="320"/>
        <end position="323"/>
    </location>
</feature>
<feature type="helix" evidence="3">
    <location>
        <begin position="328"/>
        <end position="340"/>
    </location>
</feature>
<name>TAS_ECOLI</name>
<keyword id="KW-0002">3D-structure</keyword>
<keyword id="KW-0521">NADP</keyword>
<keyword id="KW-0560">Oxidoreductase</keyword>
<keyword id="KW-1185">Reference proteome</keyword>
<protein>
    <recommendedName>
        <fullName>Protein tas</fullName>
    </recommendedName>
</protein>
<evidence type="ECO:0000269" key="1">
    <source>
    </source>
</evidence>
<evidence type="ECO:0000305" key="2"/>
<evidence type="ECO:0007829" key="3">
    <source>
        <dbReference type="PDB" id="1LQA"/>
    </source>
</evidence>
<dbReference type="EMBL" id="Y14609">
    <property type="protein sequence ID" value="CAA74961.1"/>
    <property type="molecule type" value="Genomic_DNA"/>
</dbReference>
<dbReference type="EMBL" id="U29581">
    <property type="protein sequence ID" value="AAB40481.1"/>
    <property type="molecule type" value="Genomic_DNA"/>
</dbReference>
<dbReference type="EMBL" id="U00096">
    <property type="protein sequence ID" value="AAC75873.1"/>
    <property type="molecule type" value="Genomic_DNA"/>
</dbReference>
<dbReference type="EMBL" id="AP009048">
    <property type="protein sequence ID" value="BAE76903.1"/>
    <property type="molecule type" value="Genomic_DNA"/>
</dbReference>
<dbReference type="PIR" id="C65066">
    <property type="entry name" value="C65066"/>
</dbReference>
<dbReference type="RefSeq" id="NP_417311.1">
    <property type="nucleotide sequence ID" value="NC_000913.3"/>
</dbReference>
<dbReference type="RefSeq" id="WP_001199295.1">
    <property type="nucleotide sequence ID" value="NZ_STEB01000034.1"/>
</dbReference>
<dbReference type="PDB" id="1LQA">
    <property type="method" value="X-ray"/>
    <property type="resolution" value="1.60 A"/>
    <property type="chains" value="A/B=1-346"/>
</dbReference>
<dbReference type="PDBsum" id="1LQA"/>
<dbReference type="SMR" id="P0A9T4"/>
<dbReference type="BioGRID" id="4263141">
    <property type="interactions" value="15"/>
</dbReference>
<dbReference type="DIP" id="DIP-48107N"/>
<dbReference type="FunCoup" id="P0A9T4">
    <property type="interactions" value="382"/>
</dbReference>
<dbReference type="IntAct" id="P0A9T4">
    <property type="interactions" value="3"/>
</dbReference>
<dbReference type="STRING" id="511145.b2834"/>
<dbReference type="TCDB" id="8.A.5.1.5">
    <property type="family name" value="the voltage-gated k(+) channel Beta-subunit (kvBeta) family"/>
</dbReference>
<dbReference type="jPOST" id="P0A9T4"/>
<dbReference type="PaxDb" id="511145-b2834"/>
<dbReference type="EnsemblBacteria" id="AAC75873">
    <property type="protein sequence ID" value="AAC75873"/>
    <property type="gene ID" value="b2834"/>
</dbReference>
<dbReference type="GeneID" id="947306"/>
<dbReference type="KEGG" id="ecj:JW2802"/>
<dbReference type="KEGG" id="eco:b2834"/>
<dbReference type="KEGG" id="ecoc:C3026_15565"/>
<dbReference type="PATRIC" id="fig|1411691.4.peg.3900"/>
<dbReference type="EchoBASE" id="EB2898"/>
<dbReference type="eggNOG" id="COG0667">
    <property type="taxonomic scope" value="Bacteria"/>
</dbReference>
<dbReference type="HOGENOM" id="CLU_023205_2_0_6"/>
<dbReference type="InParanoid" id="P0A9T4"/>
<dbReference type="OMA" id="YLPWSPL"/>
<dbReference type="OrthoDB" id="9772407at2"/>
<dbReference type="PhylomeDB" id="P0A9T4"/>
<dbReference type="BioCyc" id="EcoCyc:G7462-MONOMER"/>
<dbReference type="EvolutionaryTrace" id="P0A9T4"/>
<dbReference type="PRO" id="PR:P0A9T4"/>
<dbReference type="Proteomes" id="UP000000625">
    <property type="component" value="Chromosome"/>
</dbReference>
<dbReference type="GO" id="GO:0005829">
    <property type="term" value="C:cytosol"/>
    <property type="evidence" value="ECO:0000314"/>
    <property type="project" value="EcoCyc"/>
</dbReference>
<dbReference type="GO" id="GO:0004033">
    <property type="term" value="F:aldo-keto reductase (NADPH) activity"/>
    <property type="evidence" value="ECO:0000304"/>
    <property type="project" value="EcoliWiki"/>
</dbReference>
<dbReference type="GO" id="GO:0034198">
    <property type="term" value="P:cellular response to amino acid starvation"/>
    <property type="evidence" value="ECO:0000315"/>
    <property type="project" value="EcoliWiki"/>
</dbReference>
<dbReference type="CDD" id="cd19094">
    <property type="entry name" value="AKR_Tas-like"/>
    <property type="match status" value="1"/>
</dbReference>
<dbReference type="FunFam" id="3.20.20.100:FF:000005">
    <property type="entry name" value="NADP(H)-dependent aldo-keto reductase"/>
    <property type="match status" value="1"/>
</dbReference>
<dbReference type="Gene3D" id="3.20.20.100">
    <property type="entry name" value="NADP-dependent oxidoreductase domain"/>
    <property type="match status" value="1"/>
</dbReference>
<dbReference type="InterPro" id="IPR020471">
    <property type="entry name" value="AKR"/>
</dbReference>
<dbReference type="InterPro" id="IPR050523">
    <property type="entry name" value="AKR_Detox_Biosynth"/>
</dbReference>
<dbReference type="InterPro" id="IPR023210">
    <property type="entry name" value="NADP_OxRdtase_dom"/>
</dbReference>
<dbReference type="InterPro" id="IPR036812">
    <property type="entry name" value="NADP_OxRdtase_dom_sf"/>
</dbReference>
<dbReference type="NCBIfam" id="NF007912">
    <property type="entry name" value="PRK10625.1"/>
    <property type="match status" value="1"/>
</dbReference>
<dbReference type="PANTHER" id="PTHR43364:SF4">
    <property type="entry name" value="NAD(P)-LINKED OXIDOREDUCTASE SUPERFAMILY PROTEIN"/>
    <property type="match status" value="1"/>
</dbReference>
<dbReference type="PANTHER" id="PTHR43364">
    <property type="entry name" value="NADH-SPECIFIC METHYLGLYOXAL REDUCTASE-RELATED"/>
    <property type="match status" value="1"/>
</dbReference>
<dbReference type="Pfam" id="PF00248">
    <property type="entry name" value="Aldo_ket_red"/>
    <property type="match status" value="1"/>
</dbReference>
<dbReference type="PRINTS" id="PR00069">
    <property type="entry name" value="ALDKETRDTASE"/>
</dbReference>
<dbReference type="SUPFAM" id="SSF51430">
    <property type="entry name" value="NAD(P)-linked oxidoreductase"/>
    <property type="match status" value="1"/>
</dbReference>
<organism>
    <name type="scientific">Escherichia coli (strain K12)</name>
    <dbReference type="NCBI Taxonomy" id="83333"/>
    <lineage>
        <taxon>Bacteria</taxon>
        <taxon>Pseudomonadati</taxon>
        <taxon>Pseudomonadota</taxon>
        <taxon>Gammaproteobacteria</taxon>
        <taxon>Enterobacterales</taxon>
        <taxon>Enterobacteriaceae</taxon>
        <taxon>Escherichia</taxon>
    </lineage>
</organism>
<gene>
    <name type="primary">tas</name>
    <name type="synonym">ygdS</name>
    <name type="ordered locus">b2834</name>
    <name type="ordered locus">JW2802</name>
</gene>